<comment type="function">
    <text evidence="1">Involved in the final reduction of the elongation cycle of fatty acid synthesis (FAS II). Catalyzes the reduction of a carbon-carbon double bond in an enoyl moiety that is covalently linked to an acyl carrier protein (ACP).</text>
</comment>
<comment type="catalytic activity">
    <reaction evidence="1">
        <text>a 2,3-saturated acyl-[ACP] + NAD(+) = a (2E)-enoyl-[ACP] + NADH + H(+)</text>
        <dbReference type="Rhea" id="RHEA:10240"/>
        <dbReference type="Rhea" id="RHEA-COMP:9925"/>
        <dbReference type="Rhea" id="RHEA-COMP:9926"/>
        <dbReference type="ChEBI" id="CHEBI:15378"/>
        <dbReference type="ChEBI" id="CHEBI:57540"/>
        <dbReference type="ChEBI" id="CHEBI:57945"/>
        <dbReference type="ChEBI" id="CHEBI:78784"/>
        <dbReference type="ChEBI" id="CHEBI:78785"/>
        <dbReference type="EC" id="1.3.1.9"/>
    </reaction>
</comment>
<comment type="pathway">
    <text evidence="1">Lipid metabolism; fatty acid biosynthesis.</text>
</comment>
<comment type="subunit">
    <text evidence="1">Monomer.</text>
</comment>
<comment type="similarity">
    <text evidence="1">Belongs to the TER reductase family.</text>
</comment>
<comment type="sequence caution" evidence="2">
    <conflict type="erroneous initiation">
        <sequence resource="EMBL-CDS" id="AAO28892"/>
    </conflict>
    <text>Extended N-terminus.</text>
</comment>
<evidence type="ECO:0000255" key="1">
    <source>
        <dbReference type="HAMAP-Rule" id="MF_01838"/>
    </source>
</evidence>
<evidence type="ECO:0000305" key="2"/>
<accession>Q87CN3</accession>
<keyword id="KW-0275">Fatty acid biosynthesis</keyword>
<keyword id="KW-0276">Fatty acid metabolism</keyword>
<keyword id="KW-0444">Lipid biosynthesis</keyword>
<keyword id="KW-0443">Lipid metabolism</keyword>
<keyword id="KW-0520">NAD</keyword>
<keyword id="KW-0560">Oxidoreductase</keyword>
<keyword id="KW-1185">Reference proteome</keyword>
<reference key="1">
    <citation type="journal article" date="2003" name="J. Bacteriol.">
        <title>Comparative analyses of the complete genome sequences of Pierce's disease and citrus variegated chlorosis strains of Xylella fastidiosa.</title>
        <authorList>
            <person name="Van Sluys M.A."/>
            <person name="de Oliveira M.C."/>
            <person name="Monteiro-Vitorello C.B."/>
            <person name="Miyaki C.Y."/>
            <person name="Furlan L.R."/>
            <person name="Camargo L.E.A."/>
            <person name="da Silva A.C.R."/>
            <person name="Moon D.H."/>
            <person name="Takita M.A."/>
            <person name="Lemos E.G.M."/>
            <person name="Machado M.A."/>
            <person name="Ferro M.I.T."/>
            <person name="da Silva F.R."/>
            <person name="Goldman M.H.S."/>
            <person name="Goldman G.H."/>
            <person name="Lemos M.V.F."/>
            <person name="El-Dorry H."/>
            <person name="Tsai S.M."/>
            <person name="Carrer H."/>
            <person name="Carraro D.M."/>
            <person name="de Oliveira R.C."/>
            <person name="Nunes L.R."/>
            <person name="Siqueira W.J."/>
            <person name="Coutinho L.L."/>
            <person name="Kimura E.T."/>
            <person name="Ferro E.S."/>
            <person name="Harakava R."/>
            <person name="Kuramae E.E."/>
            <person name="Marino C.L."/>
            <person name="Giglioti E."/>
            <person name="Abreu I.L."/>
            <person name="Alves L.M.C."/>
            <person name="do Amaral A.M."/>
            <person name="Baia G.S."/>
            <person name="Blanco S.R."/>
            <person name="Brito M.S."/>
            <person name="Cannavan F.S."/>
            <person name="Celestino A.V."/>
            <person name="da Cunha A.F."/>
            <person name="Fenille R.C."/>
            <person name="Ferro J.A."/>
            <person name="Formighieri E.F."/>
            <person name="Kishi L.T."/>
            <person name="Leoni S.G."/>
            <person name="Oliveira A.R."/>
            <person name="Rosa V.E. Jr."/>
            <person name="Sassaki F.T."/>
            <person name="Sena J.A.D."/>
            <person name="de Souza A.A."/>
            <person name="Truffi D."/>
            <person name="Tsukumo F."/>
            <person name="Yanai G.M."/>
            <person name="Zaros L.G."/>
            <person name="Civerolo E.L."/>
            <person name="Simpson A.J.G."/>
            <person name="Almeida N.F. Jr."/>
            <person name="Setubal J.C."/>
            <person name="Kitajima J.P."/>
        </authorList>
    </citation>
    <scope>NUCLEOTIDE SEQUENCE [LARGE SCALE GENOMIC DNA]</scope>
    <source>
        <strain>Temecula1 / ATCC 700964</strain>
    </source>
</reference>
<organism>
    <name type="scientific">Xylella fastidiosa (strain Temecula1 / ATCC 700964)</name>
    <dbReference type="NCBI Taxonomy" id="183190"/>
    <lineage>
        <taxon>Bacteria</taxon>
        <taxon>Pseudomonadati</taxon>
        <taxon>Pseudomonadota</taxon>
        <taxon>Gammaproteobacteria</taxon>
        <taxon>Lysobacterales</taxon>
        <taxon>Lysobacteraceae</taxon>
        <taxon>Xylella</taxon>
    </lineage>
</organism>
<proteinExistence type="inferred from homology"/>
<feature type="chain" id="PRO_0000220062" description="Enoyl-[acyl-carrier-protein] reductase [NADH]">
    <location>
        <begin position="1"/>
        <end position="401"/>
    </location>
</feature>
<feature type="active site" description="Proton donor" evidence="1">
    <location>
        <position position="236"/>
    </location>
</feature>
<feature type="binding site" evidence="1">
    <location>
        <begin position="48"/>
        <end position="53"/>
    </location>
    <ligand>
        <name>NAD(+)</name>
        <dbReference type="ChEBI" id="CHEBI:57540"/>
    </ligand>
</feature>
<feature type="binding site" evidence="1">
    <location>
        <begin position="74"/>
        <end position="75"/>
    </location>
    <ligand>
        <name>NAD(+)</name>
        <dbReference type="ChEBI" id="CHEBI:57540"/>
    </ligand>
</feature>
<feature type="binding site" evidence="1">
    <location>
        <begin position="111"/>
        <end position="112"/>
    </location>
    <ligand>
        <name>NAD(+)</name>
        <dbReference type="ChEBI" id="CHEBI:57540"/>
    </ligand>
</feature>
<feature type="binding site" evidence="1">
    <location>
        <begin position="140"/>
        <end position="141"/>
    </location>
    <ligand>
        <name>NAD(+)</name>
        <dbReference type="ChEBI" id="CHEBI:57540"/>
    </ligand>
</feature>
<feature type="binding site" evidence="1">
    <location>
        <position position="226"/>
    </location>
    <ligand>
        <name>substrate</name>
    </ligand>
</feature>
<feature type="binding site" evidence="1">
    <location>
        <position position="245"/>
    </location>
    <ligand>
        <name>NAD(+)</name>
        <dbReference type="ChEBI" id="CHEBI:57540"/>
    </ligand>
</feature>
<feature type="binding site" evidence="1">
    <location>
        <begin position="274"/>
        <end position="276"/>
    </location>
    <ligand>
        <name>NAD(+)</name>
        <dbReference type="ChEBI" id="CHEBI:57540"/>
    </ligand>
</feature>
<feature type="site" description="Plays an important role in discriminating NADH against NADPH" evidence="1">
    <location>
        <position position="75"/>
    </location>
</feature>
<name>FABV_XYLFT</name>
<dbReference type="EC" id="1.3.1.9" evidence="1"/>
<dbReference type="EMBL" id="AE009442">
    <property type="protein sequence ID" value="AAO28892.1"/>
    <property type="status" value="ALT_INIT"/>
    <property type="molecule type" value="Genomic_DNA"/>
</dbReference>
<dbReference type="RefSeq" id="WP_011097910.1">
    <property type="nucleotide sequence ID" value="NC_004556.1"/>
</dbReference>
<dbReference type="SMR" id="Q87CN3"/>
<dbReference type="GeneID" id="93904815"/>
<dbReference type="KEGG" id="xft:PD_1032"/>
<dbReference type="HOGENOM" id="CLU_057698_1_0_6"/>
<dbReference type="UniPathway" id="UPA00094"/>
<dbReference type="Proteomes" id="UP000002516">
    <property type="component" value="Chromosome"/>
</dbReference>
<dbReference type="GO" id="GO:0004318">
    <property type="term" value="F:enoyl-[acyl-carrier-protein] reductase (NADH) activity"/>
    <property type="evidence" value="ECO:0007669"/>
    <property type="project" value="UniProtKB-UniRule"/>
</dbReference>
<dbReference type="GO" id="GO:0051287">
    <property type="term" value="F:NAD binding"/>
    <property type="evidence" value="ECO:0007669"/>
    <property type="project" value="UniProtKB-UniRule"/>
</dbReference>
<dbReference type="GO" id="GO:0050343">
    <property type="term" value="F:trans-2-enoyl-CoA reductase (NADH) activity"/>
    <property type="evidence" value="ECO:0007669"/>
    <property type="project" value="TreeGrafter"/>
</dbReference>
<dbReference type="GO" id="GO:0006633">
    <property type="term" value="P:fatty acid biosynthetic process"/>
    <property type="evidence" value="ECO:0007669"/>
    <property type="project" value="UniProtKB-UniRule"/>
</dbReference>
<dbReference type="FunFam" id="3.40.50.720:FF:000221">
    <property type="entry name" value="Enoyl-[acyl-carrier-protein] reductase [NADH]"/>
    <property type="match status" value="1"/>
</dbReference>
<dbReference type="Gene3D" id="3.40.50.720">
    <property type="entry name" value="NAD(P)-binding Rossmann-like Domain"/>
    <property type="match status" value="1"/>
</dbReference>
<dbReference type="HAMAP" id="MF_01838">
    <property type="entry name" value="FabV_reductase"/>
    <property type="match status" value="1"/>
</dbReference>
<dbReference type="InterPro" id="IPR024906">
    <property type="entry name" value="Eno_Rdtase_FAD-bd_dom"/>
</dbReference>
<dbReference type="InterPro" id="IPR024910">
    <property type="entry name" value="Enoyl-CoA_Rdtase_cat_dom"/>
</dbReference>
<dbReference type="InterPro" id="IPR050048">
    <property type="entry name" value="FabV-like_NADH_b"/>
</dbReference>
<dbReference type="InterPro" id="IPR010758">
    <property type="entry name" value="Trans-2-enoyl-CoA_reductase"/>
</dbReference>
<dbReference type="NCBIfam" id="NF043048">
    <property type="entry name" value="EnoyACPredFabV"/>
    <property type="match status" value="1"/>
</dbReference>
<dbReference type="NCBIfam" id="NF010177">
    <property type="entry name" value="PRK13656.1"/>
    <property type="match status" value="1"/>
</dbReference>
<dbReference type="PANTHER" id="PTHR37480">
    <property type="entry name" value="ENOYL-[ACYL-CARRIER-PROTEIN] REDUCTASE [NADH]"/>
    <property type="match status" value="1"/>
</dbReference>
<dbReference type="PANTHER" id="PTHR37480:SF1">
    <property type="entry name" value="ENOYL-[ACYL-CARRIER-PROTEIN] REDUCTASE [NADH]"/>
    <property type="match status" value="1"/>
</dbReference>
<dbReference type="Pfam" id="PF07055">
    <property type="entry name" value="Eno-Rase_FAD_bd"/>
    <property type="match status" value="1"/>
</dbReference>
<dbReference type="Pfam" id="PF12242">
    <property type="entry name" value="Eno-Rase_NADH_b"/>
    <property type="match status" value="1"/>
</dbReference>
<dbReference type="Pfam" id="PF12241">
    <property type="entry name" value="Enoyl_reductase"/>
    <property type="match status" value="1"/>
</dbReference>
<protein>
    <recommendedName>
        <fullName evidence="1">Enoyl-[acyl-carrier-protein] reductase [NADH]</fullName>
        <shortName evidence="1">ENR</shortName>
        <ecNumber evidence="1">1.3.1.9</ecNumber>
    </recommendedName>
</protein>
<gene>
    <name evidence="1" type="primary">fabV</name>
    <name type="ordered locus">PD_1032</name>
</gene>
<sequence>MIIHPKTRGFICTTTHPVGCEYNVLEQIQSTRARGVRSNGPKKVVVIGASSGYGLATRISAAFGFGADTLGVFFEKPGTEKKPGTAGWYNAAAFDKSAKNAGLYSRSINGDAFSDEMRAKVIEIIKSEMGGHVDLVVYSLASPLRKMPSTGEIKRSVLKPIGVAHTSNAIDTNKDQIIQATVEPATEQEIADTVAVMGGQDWELWINALAQADVLAPQTRTVAFSYIGTEITWPIYWHGALGKAKADLDATSRRLDARLQFLGGGANVAVLKSVVTQASAAIPALPLYIAIVFKVMKEKGLHEGTIEQADRLLRERLYREDGQPAAIDEEHRLRLDDWELREDVQAACKVIWEQVTNENLFQLTDYANYKRDFLKLFGFERADVDYDADVNPEVAFDVIEL</sequence>